<name>LIPA_BACC2</name>
<keyword id="KW-0004">4Fe-4S</keyword>
<keyword id="KW-0963">Cytoplasm</keyword>
<keyword id="KW-0408">Iron</keyword>
<keyword id="KW-0411">Iron-sulfur</keyword>
<keyword id="KW-0479">Metal-binding</keyword>
<keyword id="KW-0949">S-adenosyl-L-methionine</keyword>
<keyword id="KW-0808">Transferase</keyword>
<feature type="chain" id="PRO_1000191447" description="Lipoyl synthase">
    <location>
        <begin position="1"/>
        <end position="298"/>
    </location>
</feature>
<feature type="domain" description="Radical SAM core" evidence="2">
    <location>
        <begin position="53"/>
        <end position="269"/>
    </location>
</feature>
<feature type="binding site" evidence="1">
    <location>
        <position position="40"/>
    </location>
    <ligand>
        <name>[4Fe-4S] cluster</name>
        <dbReference type="ChEBI" id="CHEBI:49883"/>
        <label>1</label>
    </ligand>
</feature>
<feature type="binding site" evidence="1">
    <location>
        <position position="45"/>
    </location>
    <ligand>
        <name>[4Fe-4S] cluster</name>
        <dbReference type="ChEBI" id="CHEBI:49883"/>
        <label>1</label>
    </ligand>
</feature>
<feature type="binding site" evidence="1">
    <location>
        <position position="51"/>
    </location>
    <ligand>
        <name>[4Fe-4S] cluster</name>
        <dbReference type="ChEBI" id="CHEBI:49883"/>
        <label>1</label>
    </ligand>
</feature>
<feature type="binding site" evidence="1">
    <location>
        <position position="67"/>
    </location>
    <ligand>
        <name>[4Fe-4S] cluster</name>
        <dbReference type="ChEBI" id="CHEBI:49883"/>
        <label>2</label>
        <note>4Fe-4S-S-AdoMet</note>
    </ligand>
</feature>
<feature type="binding site" evidence="1">
    <location>
        <position position="71"/>
    </location>
    <ligand>
        <name>[4Fe-4S] cluster</name>
        <dbReference type="ChEBI" id="CHEBI:49883"/>
        <label>2</label>
        <note>4Fe-4S-S-AdoMet</note>
    </ligand>
</feature>
<feature type="binding site" evidence="1">
    <location>
        <position position="74"/>
    </location>
    <ligand>
        <name>[4Fe-4S] cluster</name>
        <dbReference type="ChEBI" id="CHEBI:49883"/>
        <label>2</label>
        <note>4Fe-4S-S-AdoMet</note>
    </ligand>
</feature>
<feature type="binding site" evidence="1">
    <location>
        <position position="280"/>
    </location>
    <ligand>
        <name>[4Fe-4S] cluster</name>
        <dbReference type="ChEBI" id="CHEBI:49883"/>
        <label>1</label>
    </ligand>
</feature>
<dbReference type="EC" id="2.8.1.8" evidence="1"/>
<dbReference type="EMBL" id="CP001186">
    <property type="protein sequence ID" value="ACK93698.1"/>
    <property type="molecule type" value="Genomic_DNA"/>
</dbReference>
<dbReference type="RefSeq" id="WP_000166367.1">
    <property type="nucleotide sequence ID" value="NC_011772.1"/>
</dbReference>
<dbReference type="SMR" id="B7IMZ7"/>
<dbReference type="GeneID" id="72451648"/>
<dbReference type="KEGG" id="bcg:BCG9842_B0124"/>
<dbReference type="HOGENOM" id="CLU_033144_2_1_9"/>
<dbReference type="Proteomes" id="UP000006744">
    <property type="component" value="Chromosome"/>
</dbReference>
<dbReference type="GO" id="GO:0005737">
    <property type="term" value="C:cytoplasm"/>
    <property type="evidence" value="ECO:0007669"/>
    <property type="project" value="UniProtKB-SubCell"/>
</dbReference>
<dbReference type="GO" id="GO:0051539">
    <property type="term" value="F:4 iron, 4 sulfur cluster binding"/>
    <property type="evidence" value="ECO:0007669"/>
    <property type="project" value="UniProtKB-UniRule"/>
</dbReference>
<dbReference type="GO" id="GO:0016992">
    <property type="term" value="F:lipoate synthase activity"/>
    <property type="evidence" value="ECO:0007669"/>
    <property type="project" value="UniProtKB-UniRule"/>
</dbReference>
<dbReference type="GO" id="GO:0046872">
    <property type="term" value="F:metal ion binding"/>
    <property type="evidence" value="ECO:0007669"/>
    <property type="project" value="UniProtKB-KW"/>
</dbReference>
<dbReference type="CDD" id="cd01335">
    <property type="entry name" value="Radical_SAM"/>
    <property type="match status" value="1"/>
</dbReference>
<dbReference type="FunFam" id="3.20.20.70:FF:000040">
    <property type="entry name" value="Lipoyl synthase"/>
    <property type="match status" value="1"/>
</dbReference>
<dbReference type="Gene3D" id="3.20.20.70">
    <property type="entry name" value="Aldolase class I"/>
    <property type="match status" value="1"/>
</dbReference>
<dbReference type="HAMAP" id="MF_00206">
    <property type="entry name" value="Lipoyl_synth"/>
    <property type="match status" value="1"/>
</dbReference>
<dbReference type="InterPro" id="IPR013785">
    <property type="entry name" value="Aldolase_TIM"/>
</dbReference>
<dbReference type="InterPro" id="IPR006638">
    <property type="entry name" value="Elp3/MiaA/NifB-like_rSAM"/>
</dbReference>
<dbReference type="InterPro" id="IPR031691">
    <property type="entry name" value="LIAS_N"/>
</dbReference>
<dbReference type="InterPro" id="IPR003698">
    <property type="entry name" value="Lipoyl_synth"/>
</dbReference>
<dbReference type="InterPro" id="IPR007197">
    <property type="entry name" value="rSAM"/>
</dbReference>
<dbReference type="NCBIfam" id="TIGR00510">
    <property type="entry name" value="lipA"/>
    <property type="match status" value="1"/>
</dbReference>
<dbReference type="NCBIfam" id="NF004019">
    <property type="entry name" value="PRK05481.1"/>
    <property type="match status" value="1"/>
</dbReference>
<dbReference type="NCBIfam" id="NF009544">
    <property type="entry name" value="PRK12928.1"/>
    <property type="match status" value="1"/>
</dbReference>
<dbReference type="PANTHER" id="PTHR10949">
    <property type="entry name" value="LIPOYL SYNTHASE"/>
    <property type="match status" value="1"/>
</dbReference>
<dbReference type="PANTHER" id="PTHR10949:SF0">
    <property type="entry name" value="LIPOYL SYNTHASE, MITOCHONDRIAL"/>
    <property type="match status" value="1"/>
</dbReference>
<dbReference type="Pfam" id="PF16881">
    <property type="entry name" value="LIAS_N"/>
    <property type="match status" value="1"/>
</dbReference>
<dbReference type="Pfam" id="PF04055">
    <property type="entry name" value="Radical_SAM"/>
    <property type="match status" value="1"/>
</dbReference>
<dbReference type="PIRSF" id="PIRSF005963">
    <property type="entry name" value="Lipoyl_synth"/>
    <property type="match status" value="1"/>
</dbReference>
<dbReference type="SFLD" id="SFLDF00271">
    <property type="entry name" value="lipoyl_synthase"/>
    <property type="match status" value="1"/>
</dbReference>
<dbReference type="SFLD" id="SFLDS00029">
    <property type="entry name" value="Radical_SAM"/>
    <property type="match status" value="1"/>
</dbReference>
<dbReference type="SMART" id="SM00729">
    <property type="entry name" value="Elp3"/>
    <property type="match status" value="1"/>
</dbReference>
<dbReference type="SUPFAM" id="SSF102114">
    <property type="entry name" value="Radical SAM enzymes"/>
    <property type="match status" value="1"/>
</dbReference>
<dbReference type="PROSITE" id="PS51918">
    <property type="entry name" value="RADICAL_SAM"/>
    <property type="match status" value="1"/>
</dbReference>
<evidence type="ECO:0000255" key="1">
    <source>
        <dbReference type="HAMAP-Rule" id="MF_00206"/>
    </source>
</evidence>
<evidence type="ECO:0000255" key="2">
    <source>
        <dbReference type="PROSITE-ProRule" id="PRU01266"/>
    </source>
</evidence>
<accession>B7IMZ7</accession>
<reference key="1">
    <citation type="submission" date="2008-10" db="EMBL/GenBank/DDBJ databases">
        <title>Genome sequence of Bacillus cereus G9842.</title>
        <authorList>
            <person name="Dodson R.J."/>
            <person name="Durkin A.S."/>
            <person name="Rosovitz M.J."/>
            <person name="Rasko D.A."/>
            <person name="Hoffmaster A."/>
            <person name="Ravel J."/>
            <person name="Sutton G."/>
        </authorList>
    </citation>
    <scope>NUCLEOTIDE SEQUENCE [LARGE SCALE GENOMIC DNA]</scope>
    <source>
        <strain>G9842</strain>
    </source>
</reference>
<protein>
    <recommendedName>
        <fullName evidence="1">Lipoyl synthase</fullName>
        <ecNumber evidence="1">2.8.1.8</ecNumber>
    </recommendedName>
    <alternativeName>
        <fullName evidence="1">Lip-syn</fullName>
        <shortName evidence="1">LS</shortName>
    </alternativeName>
    <alternativeName>
        <fullName evidence="1">Lipoate synthase</fullName>
    </alternativeName>
    <alternativeName>
        <fullName evidence="1">Lipoic acid synthase</fullName>
    </alternativeName>
    <alternativeName>
        <fullName evidence="1">Sulfur insertion protein LipA</fullName>
    </alternativeName>
</protein>
<gene>
    <name evidence="1" type="primary">lipA</name>
    <name type="ordered locus">BCG9842_B0124</name>
</gene>
<comment type="function">
    <text evidence="1">Catalyzes the radical-mediated insertion of two sulfur atoms into the C-6 and C-8 positions of the octanoyl moiety bound to the lipoyl domains of lipoate-dependent enzymes, thereby converting the octanoylated domains into lipoylated derivatives.</text>
</comment>
<comment type="catalytic activity">
    <reaction evidence="1">
        <text>[[Fe-S] cluster scaffold protein carrying a second [4Fe-4S](2+) cluster] + N(6)-octanoyl-L-lysyl-[protein] + 2 oxidized [2Fe-2S]-[ferredoxin] + 2 S-adenosyl-L-methionine + 4 H(+) = [[Fe-S] cluster scaffold protein] + N(6)-[(R)-dihydrolipoyl]-L-lysyl-[protein] + 4 Fe(3+) + 2 hydrogen sulfide + 2 5'-deoxyadenosine + 2 L-methionine + 2 reduced [2Fe-2S]-[ferredoxin]</text>
        <dbReference type="Rhea" id="RHEA:16585"/>
        <dbReference type="Rhea" id="RHEA-COMP:9928"/>
        <dbReference type="Rhea" id="RHEA-COMP:10000"/>
        <dbReference type="Rhea" id="RHEA-COMP:10001"/>
        <dbReference type="Rhea" id="RHEA-COMP:10475"/>
        <dbReference type="Rhea" id="RHEA-COMP:14568"/>
        <dbReference type="Rhea" id="RHEA-COMP:14569"/>
        <dbReference type="ChEBI" id="CHEBI:15378"/>
        <dbReference type="ChEBI" id="CHEBI:17319"/>
        <dbReference type="ChEBI" id="CHEBI:29034"/>
        <dbReference type="ChEBI" id="CHEBI:29919"/>
        <dbReference type="ChEBI" id="CHEBI:33722"/>
        <dbReference type="ChEBI" id="CHEBI:33737"/>
        <dbReference type="ChEBI" id="CHEBI:33738"/>
        <dbReference type="ChEBI" id="CHEBI:57844"/>
        <dbReference type="ChEBI" id="CHEBI:59789"/>
        <dbReference type="ChEBI" id="CHEBI:78809"/>
        <dbReference type="ChEBI" id="CHEBI:83100"/>
        <dbReference type="EC" id="2.8.1.8"/>
    </reaction>
</comment>
<comment type="cofactor">
    <cofactor evidence="1">
        <name>[4Fe-4S] cluster</name>
        <dbReference type="ChEBI" id="CHEBI:49883"/>
    </cofactor>
    <text evidence="1">Binds 2 [4Fe-4S] clusters per subunit. One cluster is coordinated with 3 cysteines and an exchangeable S-adenosyl-L-methionine.</text>
</comment>
<comment type="pathway">
    <text evidence="1">Protein modification; protein lipoylation via endogenous pathway; protein N(6)-(lipoyl)lysine from octanoyl-[acyl-carrier-protein].</text>
</comment>
<comment type="subcellular location">
    <subcellularLocation>
        <location evidence="1">Cytoplasm</location>
    </subcellularLocation>
</comment>
<comment type="similarity">
    <text evidence="1">Belongs to the radical SAM superfamily. Lipoyl synthase family.</text>
</comment>
<sequence>MTKQTEYKRKPEWLKIKLNTNENYTGLKKMMRSKNLHTVCEEAKCPNIHECWAVRKTATFMILGAVCTRACRFCAVKTGLPTELDLQEPERVADSVVQMGLKHVVITAVARDDLKDGGAAVFAETVRAVRRKNPFTSIEVLPSDMAGVEENLKMLMDAKPDILNHNIETVRRLSNRVRARAKYDRSLEFLRRAKEMQPDIPTKSSIMVGLGETREDLIEAMDDLRANNVDILTLGQYLQPSKKHLPVIKYYPPAEFAELKEIALSKGFSHCEAGPLVRSSYHADEQVRSAKEKTAEAK</sequence>
<proteinExistence type="inferred from homology"/>
<organism>
    <name type="scientific">Bacillus cereus (strain G9842)</name>
    <dbReference type="NCBI Taxonomy" id="405531"/>
    <lineage>
        <taxon>Bacteria</taxon>
        <taxon>Bacillati</taxon>
        <taxon>Bacillota</taxon>
        <taxon>Bacilli</taxon>
        <taxon>Bacillales</taxon>
        <taxon>Bacillaceae</taxon>
        <taxon>Bacillus</taxon>
        <taxon>Bacillus cereus group</taxon>
    </lineage>
</organism>